<proteinExistence type="evidence at transcript level"/>
<organism>
    <name type="scientific">Tropidechis carinatus</name>
    <name type="common">Australian rough-scaled snake</name>
    <dbReference type="NCBI Taxonomy" id="100989"/>
    <lineage>
        <taxon>Eukaryota</taxon>
        <taxon>Metazoa</taxon>
        <taxon>Chordata</taxon>
        <taxon>Craniata</taxon>
        <taxon>Vertebrata</taxon>
        <taxon>Euteleostomi</taxon>
        <taxon>Lepidosauria</taxon>
        <taxon>Squamata</taxon>
        <taxon>Bifurcata</taxon>
        <taxon>Unidentata</taxon>
        <taxon>Episquamata</taxon>
        <taxon>Toxicofera</taxon>
        <taxon>Serpentes</taxon>
        <taxon>Colubroidea</taxon>
        <taxon>Elapidae</taxon>
        <taxon>Notechinae</taxon>
        <taxon>Tropidechis</taxon>
    </lineage>
</organism>
<accession>Q3HXX4</accession>
<name>NGFV5_TROCA</name>
<protein>
    <recommendedName>
        <fullName>Venom nerve growth factor 5</fullName>
        <shortName>v-NGF-5</shortName>
        <shortName>vNGF-5</shortName>
    </recommendedName>
</protein>
<evidence type="ECO:0000250" key="1"/>
<evidence type="ECO:0000250" key="2">
    <source>
        <dbReference type="UniProtKB" id="P61898"/>
    </source>
</evidence>
<evidence type="ECO:0000250" key="3">
    <source>
        <dbReference type="UniProtKB" id="P61899"/>
    </source>
</evidence>
<evidence type="ECO:0000255" key="4"/>
<evidence type="ECO:0000256" key="5">
    <source>
        <dbReference type="SAM" id="MobiDB-lite"/>
    </source>
</evidence>
<evidence type="ECO:0000305" key="6"/>
<reference key="1">
    <citation type="submission" date="2005-08" db="EMBL/GenBank/DDBJ databases">
        <title>Identification of nerve growth factor as a ubiquitous component of Australian elapid snake venoms.</title>
        <authorList>
            <person name="Earl S.T.H."/>
            <person name="St Pierre L."/>
            <person name="Birrell G.W."/>
            <person name="Wallis T.P."/>
            <person name="Masci P.P."/>
            <person name="de Jersey J."/>
            <person name="Gorman J.J."/>
            <person name="Lavin M.F."/>
        </authorList>
    </citation>
    <scope>NUCLEOTIDE SEQUENCE [MRNA]</scope>
    <source>
        <tissue>Venom gland</tissue>
    </source>
</reference>
<dbReference type="EMBL" id="DQ181921">
    <property type="protein sequence ID" value="ABA60133.1"/>
    <property type="molecule type" value="mRNA"/>
</dbReference>
<dbReference type="SMR" id="Q3HXX4"/>
<dbReference type="GO" id="GO:0030424">
    <property type="term" value="C:axon"/>
    <property type="evidence" value="ECO:0007669"/>
    <property type="project" value="TreeGrafter"/>
</dbReference>
<dbReference type="GO" id="GO:0030425">
    <property type="term" value="C:dendrite"/>
    <property type="evidence" value="ECO:0007669"/>
    <property type="project" value="TreeGrafter"/>
</dbReference>
<dbReference type="GO" id="GO:0005615">
    <property type="term" value="C:extracellular space"/>
    <property type="evidence" value="ECO:0007669"/>
    <property type="project" value="TreeGrafter"/>
</dbReference>
<dbReference type="GO" id="GO:0008021">
    <property type="term" value="C:synaptic vesicle"/>
    <property type="evidence" value="ECO:0007669"/>
    <property type="project" value="TreeGrafter"/>
</dbReference>
<dbReference type="GO" id="GO:0008083">
    <property type="term" value="F:growth factor activity"/>
    <property type="evidence" value="ECO:0007669"/>
    <property type="project" value="UniProtKB-KW"/>
</dbReference>
<dbReference type="GO" id="GO:0008289">
    <property type="term" value="F:lipid binding"/>
    <property type="evidence" value="ECO:0007669"/>
    <property type="project" value="UniProtKB-KW"/>
</dbReference>
<dbReference type="GO" id="GO:0008191">
    <property type="term" value="F:metalloendopeptidase inhibitor activity"/>
    <property type="evidence" value="ECO:0000250"/>
    <property type="project" value="UniProtKB"/>
</dbReference>
<dbReference type="GO" id="GO:0005163">
    <property type="term" value="F:nerve growth factor receptor binding"/>
    <property type="evidence" value="ECO:0007669"/>
    <property type="project" value="TreeGrafter"/>
</dbReference>
<dbReference type="GO" id="GO:0090729">
    <property type="term" value="F:toxin activity"/>
    <property type="evidence" value="ECO:0007669"/>
    <property type="project" value="UniProtKB-KW"/>
</dbReference>
<dbReference type="GO" id="GO:0007169">
    <property type="term" value="P:cell surface receptor protein tyrosine kinase signaling pathway"/>
    <property type="evidence" value="ECO:0007669"/>
    <property type="project" value="TreeGrafter"/>
</dbReference>
<dbReference type="GO" id="GO:0050804">
    <property type="term" value="P:modulation of chemical synaptic transmission"/>
    <property type="evidence" value="ECO:0007669"/>
    <property type="project" value="TreeGrafter"/>
</dbReference>
<dbReference type="GO" id="GO:0043524">
    <property type="term" value="P:negative regulation of neuron apoptotic process"/>
    <property type="evidence" value="ECO:0007669"/>
    <property type="project" value="TreeGrafter"/>
</dbReference>
<dbReference type="GO" id="GO:0021675">
    <property type="term" value="P:nerve development"/>
    <property type="evidence" value="ECO:0007669"/>
    <property type="project" value="TreeGrafter"/>
</dbReference>
<dbReference type="GO" id="GO:0038180">
    <property type="term" value="P:nerve growth factor signaling pathway"/>
    <property type="evidence" value="ECO:0007669"/>
    <property type="project" value="TreeGrafter"/>
</dbReference>
<dbReference type="GO" id="GO:0048812">
    <property type="term" value="P:neuron projection morphogenesis"/>
    <property type="evidence" value="ECO:0007669"/>
    <property type="project" value="TreeGrafter"/>
</dbReference>
<dbReference type="FunFam" id="2.10.90.10:FF:000002">
    <property type="entry name" value="Brain-derived neurotrophic factor"/>
    <property type="match status" value="1"/>
</dbReference>
<dbReference type="Gene3D" id="2.10.90.10">
    <property type="entry name" value="Cystine-knot cytokines"/>
    <property type="match status" value="1"/>
</dbReference>
<dbReference type="InterPro" id="IPR029034">
    <property type="entry name" value="Cystine-knot_cytokine"/>
</dbReference>
<dbReference type="InterPro" id="IPR020408">
    <property type="entry name" value="Nerve_growth_factor-like"/>
</dbReference>
<dbReference type="InterPro" id="IPR002072">
    <property type="entry name" value="Nerve_growth_factor-rel"/>
</dbReference>
<dbReference type="InterPro" id="IPR020425">
    <property type="entry name" value="Nerve_growth_factor_bsu"/>
</dbReference>
<dbReference type="InterPro" id="IPR019846">
    <property type="entry name" value="Nerve_growth_factor_CS"/>
</dbReference>
<dbReference type="InterPro" id="IPR020433">
    <property type="entry name" value="Venom_nerve_growth_factor"/>
</dbReference>
<dbReference type="PANTHER" id="PTHR11589:SF10">
    <property type="entry name" value="BETA-NERVE GROWTH FACTOR"/>
    <property type="match status" value="1"/>
</dbReference>
<dbReference type="PANTHER" id="PTHR11589">
    <property type="entry name" value="NERVE GROWTH FACTOR NGF -RELATED"/>
    <property type="match status" value="1"/>
</dbReference>
<dbReference type="Pfam" id="PF00243">
    <property type="entry name" value="NGF"/>
    <property type="match status" value="1"/>
</dbReference>
<dbReference type="PIRSF" id="PIRSF001789">
    <property type="entry name" value="NGF"/>
    <property type="match status" value="1"/>
</dbReference>
<dbReference type="PRINTS" id="PR00268">
    <property type="entry name" value="NGF"/>
</dbReference>
<dbReference type="PRINTS" id="PR01913">
    <property type="entry name" value="NGFBETA"/>
</dbReference>
<dbReference type="PRINTS" id="PR01917">
    <property type="entry name" value="VENOMNGF"/>
</dbReference>
<dbReference type="SMART" id="SM00140">
    <property type="entry name" value="NGF"/>
    <property type="match status" value="1"/>
</dbReference>
<dbReference type="SUPFAM" id="SSF57501">
    <property type="entry name" value="Cystine-knot cytokines"/>
    <property type="match status" value="1"/>
</dbReference>
<dbReference type="PROSITE" id="PS00248">
    <property type="entry name" value="NGF_1"/>
    <property type="match status" value="1"/>
</dbReference>
<dbReference type="PROSITE" id="PS50270">
    <property type="entry name" value="NGF_2"/>
    <property type="match status" value="1"/>
</dbReference>
<sequence length="243" mass="27593">MSMLCYTLIIAFLIGIWAAPKSEDNVPLGSPATSDLSDTSCAQTHEGLKTSRNTDQRHPAPKKAEDQELGSVANIIVDPKLFQKRRFQSPRVLFSIQPPPLSRDEQSVEFLDNEDTLNRNIRTKRETHPVYNRGEHSVCDSVSVWVTNKTKATDIKGNMVTVMVDINLNNEVYKQYFFETKCRNPNPVPSGCRGTDSRHWNSYCTTTQTFVRALTMEGNQASWRFIRIDTACVCVIIRKTDNF</sequence>
<keyword id="KW-0165">Cleavage on pair of basic residues</keyword>
<keyword id="KW-1015">Disulfide bond</keyword>
<keyword id="KW-0325">Glycoprotein</keyword>
<keyword id="KW-0339">Growth factor</keyword>
<keyword id="KW-0446">Lipid-binding</keyword>
<keyword id="KW-0481">Metalloenzyme inhibitor</keyword>
<keyword id="KW-0483">Metalloprotease inhibitor</keyword>
<keyword id="KW-0646">Protease inhibitor</keyword>
<keyword id="KW-0964">Secreted</keyword>
<keyword id="KW-0732">Signal</keyword>
<keyword id="KW-0800">Toxin</keyword>
<feature type="signal peptide" evidence="4">
    <location>
        <begin position="1"/>
        <end position="18"/>
    </location>
</feature>
<feature type="propeptide" id="PRO_0000043325" evidence="1">
    <location>
        <begin position="19"/>
        <end position="125"/>
    </location>
</feature>
<feature type="chain" id="PRO_0000043326" description="Venom nerve growth factor 5">
    <location>
        <begin position="126"/>
        <end position="243"/>
    </location>
</feature>
<feature type="region of interest" description="Disordered" evidence="5">
    <location>
        <begin position="47"/>
        <end position="67"/>
    </location>
</feature>
<feature type="compositionally biased region" description="Basic and acidic residues" evidence="5">
    <location>
        <begin position="47"/>
        <end position="66"/>
    </location>
</feature>
<feature type="glycosylation site" description="N-linked (GlcNAc...) asparagine" evidence="4">
    <location>
        <position position="148"/>
    </location>
</feature>
<feature type="disulfide bond" evidence="2">
    <location>
        <begin position="139"/>
        <end position="204"/>
    </location>
</feature>
<feature type="disulfide bond" evidence="2">
    <location>
        <begin position="182"/>
        <end position="232"/>
    </location>
</feature>
<feature type="disulfide bond" evidence="2">
    <location>
        <begin position="192"/>
        <end position="234"/>
    </location>
</feature>
<comment type="function">
    <text evidence="2 3">Nerve growth factor is important for the development and maintenance of the sympathetic and sensory nervous systems. It stimulates division and differentiation of sympathetic and embryonic sensory neurons as well as basal forebrain cholinergic neurons in the brain. Its relevance in the snake venom is not clear. However, it has been shown to inhibit metalloproteinase-dependent proteolysis of platelet glycoprotein Ib alpha, suggesting a metalloproteinase inhibition to prevent metalloprotease autodigestion and/or protection against prey proteases (By similarity). Binds a lipid between the two protein chains in the homodimer. The lipid-bound form promotes histamine relase from mouse mast cells, contrary to the lipid-free form (By similarity).</text>
</comment>
<comment type="subunit">
    <text evidence="2">Homodimer; non-covalently linked.</text>
</comment>
<comment type="subcellular location">
    <subcellularLocation>
        <location evidence="2">Secreted</location>
    </subcellularLocation>
</comment>
<comment type="tissue specificity">
    <text>Expressed by the venom gland.</text>
</comment>
<comment type="similarity">
    <text evidence="6">Belongs to the NGF-beta family.</text>
</comment>